<proteinExistence type="inferred from homology"/>
<keyword id="KW-0342">GTP-binding</keyword>
<keyword id="KW-0378">Hydrolase</keyword>
<keyword id="KW-0396">Initiation factor</keyword>
<keyword id="KW-0460">Magnesium</keyword>
<keyword id="KW-0479">Metal-binding</keyword>
<keyword id="KW-0547">Nucleotide-binding</keyword>
<keyword id="KW-0648">Protein biosynthesis</keyword>
<keyword id="KW-1185">Reference proteome</keyword>
<gene>
    <name evidence="1" type="primary">eif2g</name>
    <name type="ordered locus">rrnAC2827</name>
</gene>
<protein>
    <recommendedName>
        <fullName evidence="1">Translation initiation factor 2 subunit gamma</fullName>
        <ecNumber evidence="1">3.6.5.3</ecNumber>
    </recommendedName>
    <alternativeName>
        <fullName evidence="1">aIF2-gamma</fullName>
    </alternativeName>
    <alternativeName>
        <fullName evidence="1">eIF-2-gamma</fullName>
    </alternativeName>
</protein>
<organism>
    <name type="scientific">Haloarcula marismortui (strain ATCC 43049 / DSM 3752 / JCM 8966 / VKM B-1809)</name>
    <name type="common">Halobacterium marismortui</name>
    <dbReference type="NCBI Taxonomy" id="272569"/>
    <lineage>
        <taxon>Archaea</taxon>
        <taxon>Methanobacteriati</taxon>
        <taxon>Methanobacteriota</taxon>
        <taxon>Stenosarchaea group</taxon>
        <taxon>Halobacteria</taxon>
        <taxon>Halobacteriales</taxon>
        <taxon>Haloarculaceae</taxon>
        <taxon>Haloarcula</taxon>
    </lineage>
</organism>
<accession>Q5UYS2</accession>
<dbReference type="EC" id="3.6.5.3" evidence="1"/>
<dbReference type="EMBL" id="AY596297">
    <property type="protein sequence ID" value="AAV47581.1"/>
    <property type="molecule type" value="Genomic_DNA"/>
</dbReference>
<dbReference type="RefSeq" id="WP_004960453.1">
    <property type="nucleotide sequence ID" value="NZ_CP039138.1"/>
</dbReference>
<dbReference type="SMR" id="Q5UYS2"/>
<dbReference type="STRING" id="272569.rrnAC2827"/>
<dbReference type="PaxDb" id="272569-rrnAC2827"/>
<dbReference type="EnsemblBacteria" id="AAV47581">
    <property type="protein sequence ID" value="AAV47581"/>
    <property type="gene ID" value="rrnAC2827"/>
</dbReference>
<dbReference type="KEGG" id="hma:rrnAC2827"/>
<dbReference type="PATRIC" id="fig|272569.17.peg.3400"/>
<dbReference type="eggNOG" id="arCOG01563">
    <property type="taxonomic scope" value="Archaea"/>
</dbReference>
<dbReference type="HOGENOM" id="CLU_027154_0_1_2"/>
<dbReference type="Proteomes" id="UP000001169">
    <property type="component" value="Chromosome I"/>
</dbReference>
<dbReference type="GO" id="GO:0005829">
    <property type="term" value="C:cytosol"/>
    <property type="evidence" value="ECO:0007669"/>
    <property type="project" value="TreeGrafter"/>
</dbReference>
<dbReference type="GO" id="GO:0005525">
    <property type="term" value="F:GTP binding"/>
    <property type="evidence" value="ECO:0007669"/>
    <property type="project" value="UniProtKB-UniRule"/>
</dbReference>
<dbReference type="GO" id="GO:0003924">
    <property type="term" value="F:GTPase activity"/>
    <property type="evidence" value="ECO:0007669"/>
    <property type="project" value="InterPro"/>
</dbReference>
<dbReference type="GO" id="GO:0046872">
    <property type="term" value="F:metal ion binding"/>
    <property type="evidence" value="ECO:0007669"/>
    <property type="project" value="UniProtKB-KW"/>
</dbReference>
<dbReference type="GO" id="GO:0003746">
    <property type="term" value="F:translation elongation factor activity"/>
    <property type="evidence" value="ECO:0007669"/>
    <property type="project" value="UniProtKB-UniRule"/>
</dbReference>
<dbReference type="GO" id="GO:0003743">
    <property type="term" value="F:translation initiation factor activity"/>
    <property type="evidence" value="ECO:0007669"/>
    <property type="project" value="UniProtKB-KW"/>
</dbReference>
<dbReference type="GO" id="GO:0000049">
    <property type="term" value="F:tRNA binding"/>
    <property type="evidence" value="ECO:0007669"/>
    <property type="project" value="TreeGrafter"/>
</dbReference>
<dbReference type="GO" id="GO:0001731">
    <property type="term" value="P:formation of translation preinitiation complex"/>
    <property type="evidence" value="ECO:0007669"/>
    <property type="project" value="TreeGrafter"/>
</dbReference>
<dbReference type="CDD" id="cd01888">
    <property type="entry name" value="eIF2_gamma"/>
    <property type="match status" value="1"/>
</dbReference>
<dbReference type="CDD" id="cd15490">
    <property type="entry name" value="eIF2_gamma_III"/>
    <property type="match status" value="1"/>
</dbReference>
<dbReference type="FunFam" id="3.40.50.300:FF:000065">
    <property type="entry name" value="Eukaryotic translation initiation factor 2 subunit gamma"/>
    <property type="match status" value="1"/>
</dbReference>
<dbReference type="FunFam" id="2.40.30.10:FF:000075">
    <property type="entry name" value="Translation initiation factor 2 subunit gamma"/>
    <property type="match status" value="1"/>
</dbReference>
<dbReference type="Gene3D" id="3.40.50.300">
    <property type="entry name" value="P-loop containing nucleotide triphosphate hydrolases"/>
    <property type="match status" value="1"/>
</dbReference>
<dbReference type="Gene3D" id="2.40.30.10">
    <property type="entry name" value="Translation factors"/>
    <property type="match status" value="2"/>
</dbReference>
<dbReference type="HAMAP" id="MF_00119">
    <property type="entry name" value="eIF_2_gamma"/>
    <property type="match status" value="1"/>
</dbReference>
<dbReference type="InterPro" id="IPR050543">
    <property type="entry name" value="eIF2G"/>
</dbReference>
<dbReference type="InterPro" id="IPR015256">
    <property type="entry name" value="eIF2g_C"/>
</dbReference>
<dbReference type="InterPro" id="IPR044128">
    <property type="entry name" value="eIF2g_GTP-bd"/>
</dbReference>
<dbReference type="InterPro" id="IPR027417">
    <property type="entry name" value="P-loop_NTPase"/>
</dbReference>
<dbReference type="InterPro" id="IPR005225">
    <property type="entry name" value="Small_GTP-bd"/>
</dbReference>
<dbReference type="InterPro" id="IPR000795">
    <property type="entry name" value="T_Tr_GTP-bd_dom"/>
</dbReference>
<dbReference type="InterPro" id="IPR022424">
    <property type="entry name" value="TIF2_gsu"/>
</dbReference>
<dbReference type="InterPro" id="IPR009000">
    <property type="entry name" value="Transl_B-barrel_sf"/>
</dbReference>
<dbReference type="InterPro" id="IPR009001">
    <property type="entry name" value="Transl_elong_EF1A/Init_IF2_C"/>
</dbReference>
<dbReference type="NCBIfam" id="TIGR03680">
    <property type="entry name" value="eif2g_arch"/>
    <property type="match status" value="1"/>
</dbReference>
<dbReference type="NCBIfam" id="NF003077">
    <property type="entry name" value="PRK04000.1"/>
    <property type="match status" value="1"/>
</dbReference>
<dbReference type="NCBIfam" id="TIGR00231">
    <property type="entry name" value="small_GTP"/>
    <property type="match status" value="1"/>
</dbReference>
<dbReference type="PANTHER" id="PTHR42854">
    <property type="entry name" value="EUKARYOTIC TRANSLATION INITIATION FACTOR 2 SUBUNIT 3 FAMILY MEMBER"/>
    <property type="match status" value="1"/>
</dbReference>
<dbReference type="PANTHER" id="PTHR42854:SF3">
    <property type="entry name" value="EUKARYOTIC TRANSLATION INITIATION FACTOR 2 SUBUNIT 3-RELATED"/>
    <property type="match status" value="1"/>
</dbReference>
<dbReference type="Pfam" id="PF09173">
    <property type="entry name" value="eIF2_C"/>
    <property type="match status" value="1"/>
</dbReference>
<dbReference type="Pfam" id="PF00009">
    <property type="entry name" value="GTP_EFTU"/>
    <property type="match status" value="1"/>
</dbReference>
<dbReference type="PRINTS" id="PR00315">
    <property type="entry name" value="ELONGATNFCT"/>
</dbReference>
<dbReference type="SUPFAM" id="SSF50465">
    <property type="entry name" value="EF-Tu/eEF-1alpha/eIF2-gamma C-terminal domain"/>
    <property type="match status" value="1"/>
</dbReference>
<dbReference type="SUPFAM" id="SSF52540">
    <property type="entry name" value="P-loop containing nucleoside triphosphate hydrolases"/>
    <property type="match status" value="1"/>
</dbReference>
<dbReference type="SUPFAM" id="SSF50447">
    <property type="entry name" value="Translation proteins"/>
    <property type="match status" value="1"/>
</dbReference>
<dbReference type="PROSITE" id="PS51722">
    <property type="entry name" value="G_TR_2"/>
    <property type="match status" value="1"/>
</dbReference>
<name>IF2G_HALMA</name>
<reference key="1">
    <citation type="journal article" date="2004" name="Genome Res.">
        <title>Genome sequence of Haloarcula marismortui: a halophilic archaeon from the Dead Sea.</title>
        <authorList>
            <person name="Baliga N.S."/>
            <person name="Bonneau R."/>
            <person name="Facciotti M.T."/>
            <person name="Pan M."/>
            <person name="Glusman G."/>
            <person name="Deutsch E.W."/>
            <person name="Shannon P."/>
            <person name="Chiu Y."/>
            <person name="Weng R.S."/>
            <person name="Gan R.R."/>
            <person name="Hung P."/>
            <person name="Date S.V."/>
            <person name="Marcotte E."/>
            <person name="Hood L."/>
            <person name="Ng W.V."/>
        </authorList>
    </citation>
    <scope>NUCLEOTIDE SEQUENCE [LARGE SCALE GENOMIC DNA]</scope>
    <source>
        <strain>ATCC 43049 / DSM 3752 / JCM 8966 / VKM B-1809</strain>
    </source>
</reference>
<feature type="chain" id="PRO_0000137451" description="Translation initiation factor 2 subunit gamma">
    <location>
        <begin position="1"/>
        <end position="409"/>
    </location>
</feature>
<feature type="domain" description="tr-type G" evidence="1">
    <location>
        <begin position="6"/>
        <end position="203"/>
    </location>
</feature>
<feature type="region of interest" description="G1" evidence="1">
    <location>
        <begin position="15"/>
        <end position="22"/>
    </location>
</feature>
<feature type="region of interest" description="G2" evidence="1">
    <location>
        <begin position="43"/>
        <end position="47"/>
    </location>
</feature>
<feature type="region of interest" description="G3" evidence="1">
    <location>
        <begin position="90"/>
        <end position="93"/>
    </location>
</feature>
<feature type="region of interest" description="G4" evidence="1">
    <location>
        <begin position="146"/>
        <end position="149"/>
    </location>
</feature>
<feature type="region of interest" description="G5" evidence="1">
    <location>
        <begin position="181"/>
        <end position="183"/>
    </location>
</feature>
<feature type="binding site" evidence="1">
    <location>
        <begin position="18"/>
        <end position="23"/>
    </location>
    <ligand>
        <name>GTP</name>
        <dbReference type="ChEBI" id="CHEBI:37565"/>
    </ligand>
</feature>
<feature type="binding site" evidence="1">
    <location>
        <position position="18"/>
    </location>
    <ligand>
        <name>Mg(2+)</name>
        <dbReference type="ChEBI" id="CHEBI:18420"/>
        <label>2</label>
    </ligand>
</feature>
<feature type="binding site" evidence="1">
    <location>
        <position position="22"/>
    </location>
    <ligand>
        <name>Mg(2+)</name>
        <dbReference type="ChEBI" id="CHEBI:18420"/>
        <label>1</label>
    </ligand>
</feature>
<feature type="binding site" evidence="1">
    <location>
        <position position="43"/>
    </location>
    <ligand>
        <name>Mg(2+)</name>
        <dbReference type="ChEBI" id="CHEBI:18420"/>
        <label>2</label>
    </ligand>
</feature>
<feature type="binding site" evidence="1">
    <location>
        <position position="45"/>
    </location>
    <ligand>
        <name>Mg(2+)</name>
        <dbReference type="ChEBI" id="CHEBI:18420"/>
        <label>1</label>
    </ligand>
</feature>
<feature type="binding site" evidence="1">
    <location>
        <begin position="146"/>
        <end position="149"/>
    </location>
    <ligand>
        <name>GTP</name>
        <dbReference type="ChEBI" id="CHEBI:37565"/>
    </ligand>
</feature>
<feature type="binding site" evidence="1">
    <location>
        <begin position="181"/>
        <end position="183"/>
    </location>
    <ligand>
        <name>GTP</name>
        <dbReference type="ChEBI" id="CHEBI:37565"/>
    </ligand>
</feature>
<sequence length="409" mass="43501">MTSNKQPEVNIGLVGHVDHGKTTLVQALSGEWTDQHSEEMKRGISIRLGYADATFRRCPEAEEPEAFTVDEHCDDHDVDTDHLRTVSFVDAPGHETLMATMLSGAAIMDGAVLVISATEPVPQAQTEEHLSALDIIGIDNIVIAQNKVDLVDEERAMQNYEQIQEFVEGTVAEGAPVVPISAGQEANIDLLIEAVQSEIPTPERDPDEDARMMVARSFDINRPGTTWDDLMGGVLGGSLVGGQLDADDEIELRPGREVEEGGKTEWQPVTTTVRSLQSGGDFVDTVTPGGLLGVGTGLDPAITKGDALAGQVAGPPGSLPPVHETFTMDVDLLERIVGDDGGEVDEISTGEPLMLTIGTATTVGSVTSARDDECEVALKRPVCAASGSKIAINRRVGARWRLIGVGTLR</sequence>
<comment type="function">
    <text evidence="1">eIF-2 functions in the early steps of protein synthesis by forming a ternary complex with GTP and initiator tRNA.</text>
</comment>
<comment type="catalytic activity">
    <reaction evidence="1">
        <text>GTP + H2O = GDP + phosphate + H(+)</text>
        <dbReference type="Rhea" id="RHEA:19669"/>
        <dbReference type="ChEBI" id="CHEBI:15377"/>
        <dbReference type="ChEBI" id="CHEBI:15378"/>
        <dbReference type="ChEBI" id="CHEBI:37565"/>
        <dbReference type="ChEBI" id="CHEBI:43474"/>
        <dbReference type="ChEBI" id="CHEBI:58189"/>
        <dbReference type="EC" id="3.6.5.3"/>
    </reaction>
</comment>
<comment type="cofactor">
    <cofactor evidence="1">
        <name>Mg(2+)</name>
        <dbReference type="ChEBI" id="CHEBI:18420"/>
    </cofactor>
</comment>
<comment type="subunit">
    <text evidence="1">Heterotrimer composed of an alpha, a beta and a gamma chain.</text>
</comment>
<comment type="similarity">
    <text evidence="1">Belongs to the TRAFAC class translation factor GTPase superfamily. Classic translation factor GTPase family. EIF2G subfamily.</text>
</comment>
<evidence type="ECO:0000255" key="1">
    <source>
        <dbReference type="HAMAP-Rule" id="MF_00119"/>
    </source>
</evidence>